<proteinExistence type="inferred from homology"/>
<name>CSRA_ALIFM</name>
<comment type="function">
    <text evidence="1">A key translational regulator that binds mRNA to regulate translation initiation and/or mRNA stability. Mediates global changes in gene expression, shifting from rapid growth to stress survival by linking envelope stress, the stringent response and the catabolite repression systems. Usually binds in the 5'-UTR; binding at or near the Shine-Dalgarno sequence prevents ribosome-binding, repressing translation, binding elsewhere in the 5'-UTR can activate translation and/or stabilize the mRNA. Its function is antagonized by small RNA(s).</text>
</comment>
<comment type="subunit">
    <text evidence="1">Homodimer; the beta-strands of each monomer intercalate to form a hydrophobic core, while the alpha-helices form wings that extend away from the core.</text>
</comment>
<comment type="subcellular location">
    <subcellularLocation>
        <location evidence="1">Cytoplasm</location>
    </subcellularLocation>
</comment>
<comment type="similarity">
    <text evidence="1">Belongs to the CsrA/RsmA family.</text>
</comment>
<reference key="1">
    <citation type="submission" date="2008-08" db="EMBL/GenBank/DDBJ databases">
        <title>Complete sequence of Vibrio fischeri strain MJ11.</title>
        <authorList>
            <person name="Mandel M.J."/>
            <person name="Stabb E.V."/>
            <person name="Ruby E.G."/>
            <person name="Ferriera S."/>
            <person name="Johnson J."/>
            <person name="Kravitz S."/>
            <person name="Beeson K."/>
            <person name="Sutton G."/>
            <person name="Rogers Y.-H."/>
            <person name="Friedman R."/>
            <person name="Frazier M."/>
            <person name="Venter J.C."/>
        </authorList>
    </citation>
    <scope>NUCLEOTIDE SEQUENCE [LARGE SCALE GENOMIC DNA]</scope>
    <source>
        <strain>MJ11</strain>
    </source>
</reference>
<protein>
    <recommendedName>
        <fullName evidence="1">Translational regulator CsrA</fullName>
    </recommendedName>
    <alternativeName>
        <fullName evidence="1">Carbon storage regulator</fullName>
    </alternativeName>
</protein>
<evidence type="ECO:0000255" key="1">
    <source>
        <dbReference type="HAMAP-Rule" id="MF_00167"/>
    </source>
</evidence>
<keyword id="KW-0010">Activator</keyword>
<keyword id="KW-0963">Cytoplasm</keyword>
<keyword id="KW-0678">Repressor</keyword>
<keyword id="KW-0694">RNA-binding</keyword>
<keyword id="KW-0810">Translation regulation</keyword>
<accession>B5FAD3</accession>
<sequence>MLILTRRVGETLMIGDEVTVTVLGVKGNQVRIGVNAPKEVSVHREEIYMRIQAEKGTPAASQGNF</sequence>
<feature type="chain" id="PRO_1000097515" description="Translational regulator CsrA">
    <location>
        <begin position="1"/>
        <end position="65"/>
    </location>
</feature>
<gene>
    <name evidence="1" type="primary">csrA</name>
    <name type="ordered locus">VFMJ11_0541</name>
</gene>
<organism>
    <name type="scientific">Aliivibrio fischeri (strain MJ11)</name>
    <name type="common">Vibrio fischeri</name>
    <dbReference type="NCBI Taxonomy" id="388396"/>
    <lineage>
        <taxon>Bacteria</taxon>
        <taxon>Pseudomonadati</taxon>
        <taxon>Pseudomonadota</taxon>
        <taxon>Gammaproteobacteria</taxon>
        <taxon>Vibrionales</taxon>
        <taxon>Vibrionaceae</taxon>
        <taxon>Aliivibrio</taxon>
    </lineage>
</organism>
<dbReference type="EMBL" id="CP001139">
    <property type="protein sequence ID" value="ACH65781.1"/>
    <property type="molecule type" value="Genomic_DNA"/>
</dbReference>
<dbReference type="RefSeq" id="WP_005417777.1">
    <property type="nucleotide sequence ID" value="NC_011184.1"/>
</dbReference>
<dbReference type="SMR" id="B5FAD3"/>
<dbReference type="GeneID" id="56275202"/>
<dbReference type="KEGG" id="vfm:VFMJ11_0541"/>
<dbReference type="HOGENOM" id="CLU_164837_2_2_6"/>
<dbReference type="Proteomes" id="UP000001857">
    <property type="component" value="Chromosome I"/>
</dbReference>
<dbReference type="GO" id="GO:0005829">
    <property type="term" value="C:cytosol"/>
    <property type="evidence" value="ECO:0007669"/>
    <property type="project" value="TreeGrafter"/>
</dbReference>
<dbReference type="GO" id="GO:0048027">
    <property type="term" value="F:mRNA 5'-UTR binding"/>
    <property type="evidence" value="ECO:0007669"/>
    <property type="project" value="UniProtKB-UniRule"/>
</dbReference>
<dbReference type="GO" id="GO:0006402">
    <property type="term" value="P:mRNA catabolic process"/>
    <property type="evidence" value="ECO:0007669"/>
    <property type="project" value="InterPro"/>
</dbReference>
<dbReference type="GO" id="GO:0045947">
    <property type="term" value="P:negative regulation of translational initiation"/>
    <property type="evidence" value="ECO:0007669"/>
    <property type="project" value="UniProtKB-UniRule"/>
</dbReference>
<dbReference type="GO" id="GO:0045948">
    <property type="term" value="P:positive regulation of translational initiation"/>
    <property type="evidence" value="ECO:0007669"/>
    <property type="project" value="UniProtKB-UniRule"/>
</dbReference>
<dbReference type="GO" id="GO:0006109">
    <property type="term" value="P:regulation of carbohydrate metabolic process"/>
    <property type="evidence" value="ECO:0007669"/>
    <property type="project" value="UniProtKB-UniRule"/>
</dbReference>
<dbReference type="FunFam" id="2.60.40.4380:FF:000001">
    <property type="entry name" value="Translational regulator CsrA"/>
    <property type="match status" value="1"/>
</dbReference>
<dbReference type="Gene3D" id="2.60.40.4380">
    <property type="entry name" value="Translational regulator CsrA"/>
    <property type="match status" value="1"/>
</dbReference>
<dbReference type="HAMAP" id="MF_00167">
    <property type="entry name" value="CsrA"/>
    <property type="match status" value="1"/>
</dbReference>
<dbReference type="InterPro" id="IPR003751">
    <property type="entry name" value="CsrA"/>
</dbReference>
<dbReference type="InterPro" id="IPR036107">
    <property type="entry name" value="CsrA_sf"/>
</dbReference>
<dbReference type="NCBIfam" id="TIGR00202">
    <property type="entry name" value="csrA"/>
    <property type="match status" value="1"/>
</dbReference>
<dbReference type="NCBIfam" id="NF002469">
    <property type="entry name" value="PRK01712.1"/>
    <property type="match status" value="1"/>
</dbReference>
<dbReference type="PANTHER" id="PTHR34984">
    <property type="entry name" value="CARBON STORAGE REGULATOR"/>
    <property type="match status" value="1"/>
</dbReference>
<dbReference type="PANTHER" id="PTHR34984:SF1">
    <property type="entry name" value="CARBON STORAGE REGULATOR"/>
    <property type="match status" value="1"/>
</dbReference>
<dbReference type="Pfam" id="PF02599">
    <property type="entry name" value="CsrA"/>
    <property type="match status" value="1"/>
</dbReference>
<dbReference type="SUPFAM" id="SSF117130">
    <property type="entry name" value="CsrA-like"/>
    <property type="match status" value="1"/>
</dbReference>